<accession>B6I9D6</accession>
<sequence length="372" mass="40914">MKYDLIIIGSGSVGAAAGYYATRAGLNVLMTDAHMPPHQHGSHHGDTRLIRHAYGEGEKYVPLVLRAQTLWDELSRHNEDDPIFVRSGVINLGPADSAFLANVAHSAEQWQLNVEKLDAQGIMARWPEIRVPDNYIGLFETDSGFLRSELAIKTWIQLAKEAGCAQLFNCPVTAIRHDDDGVTIETVDGEYQAKKAIVCAGTWVKDLLPELPVQPVRKVFAWYQADGRYSVKNKFPAFTGELPNGDQYYGFPAENDALKIGKHNGGQVIHSADERVPFAEVVSDGSEAFPFLRNVLPGIGCCLYGAACTYDNSPDEDFIIDTLPGHDNTLLITGLSGHGFKFASVLGEIAADFAQDKKSDFDLTPFRLSRFQ</sequence>
<evidence type="ECO:0000255" key="1">
    <source>
        <dbReference type="HAMAP-Rule" id="MF_00515"/>
    </source>
</evidence>
<feature type="chain" id="PRO_1000127440" description="N-methyl-L-tryptophan oxidase">
    <location>
        <begin position="1"/>
        <end position="372"/>
    </location>
</feature>
<feature type="binding site" evidence="1">
    <location>
        <begin position="4"/>
        <end position="34"/>
    </location>
    <ligand>
        <name>FAD</name>
        <dbReference type="ChEBI" id="CHEBI:57692"/>
    </ligand>
</feature>
<feature type="modified residue" description="S-8alpha-FAD cysteine" evidence="1">
    <location>
        <position position="308"/>
    </location>
</feature>
<dbReference type="EC" id="1.5.3.-" evidence="1"/>
<dbReference type="EMBL" id="AP009240">
    <property type="protein sequence ID" value="BAG76646.1"/>
    <property type="molecule type" value="Genomic_DNA"/>
</dbReference>
<dbReference type="RefSeq" id="WP_000872815.1">
    <property type="nucleotide sequence ID" value="NC_011415.1"/>
</dbReference>
<dbReference type="SMR" id="B6I9D6"/>
<dbReference type="KEGG" id="ecy:ECSE_1122"/>
<dbReference type="HOGENOM" id="CLU_007884_2_1_6"/>
<dbReference type="Proteomes" id="UP000008199">
    <property type="component" value="Chromosome"/>
</dbReference>
<dbReference type="GO" id="GO:0005829">
    <property type="term" value="C:cytosol"/>
    <property type="evidence" value="ECO:0007669"/>
    <property type="project" value="TreeGrafter"/>
</dbReference>
<dbReference type="GO" id="GO:0050660">
    <property type="term" value="F:flavin adenine dinucleotide binding"/>
    <property type="evidence" value="ECO:0007669"/>
    <property type="project" value="InterPro"/>
</dbReference>
<dbReference type="GO" id="GO:0050131">
    <property type="term" value="F:N-methyl-L-amino-acid oxidase activity"/>
    <property type="evidence" value="ECO:0007669"/>
    <property type="project" value="InterPro"/>
</dbReference>
<dbReference type="GO" id="GO:0008115">
    <property type="term" value="F:sarcosine oxidase activity"/>
    <property type="evidence" value="ECO:0007669"/>
    <property type="project" value="TreeGrafter"/>
</dbReference>
<dbReference type="Gene3D" id="3.30.9.10">
    <property type="entry name" value="D-Amino Acid Oxidase, subunit A, domain 2"/>
    <property type="match status" value="1"/>
</dbReference>
<dbReference type="Gene3D" id="3.50.50.60">
    <property type="entry name" value="FAD/NAD(P)-binding domain"/>
    <property type="match status" value="1"/>
</dbReference>
<dbReference type="HAMAP" id="MF_00515">
    <property type="entry name" value="MTOX"/>
    <property type="match status" value="1"/>
</dbReference>
<dbReference type="InterPro" id="IPR006076">
    <property type="entry name" value="FAD-dep_OxRdtase"/>
</dbReference>
<dbReference type="InterPro" id="IPR036188">
    <property type="entry name" value="FAD/NAD-bd_sf"/>
</dbReference>
<dbReference type="InterPro" id="IPR023493">
    <property type="entry name" value="Me_Trp_Oxase_MTOX"/>
</dbReference>
<dbReference type="InterPro" id="IPR045170">
    <property type="entry name" value="MTOX"/>
</dbReference>
<dbReference type="NCBIfam" id="NF008425">
    <property type="entry name" value="PRK11259.1"/>
    <property type="match status" value="1"/>
</dbReference>
<dbReference type="PANTHER" id="PTHR10961:SF7">
    <property type="entry name" value="FAD DEPENDENT OXIDOREDUCTASE DOMAIN-CONTAINING PROTEIN"/>
    <property type="match status" value="1"/>
</dbReference>
<dbReference type="PANTHER" id="PTHR10961">
    <property type="entry name" value="PEROXISOMAL SARCOSINE OXIDASE"/>
    <property type="match status" value="1"/>
</dbReference>
<dbReference type="Pfam" id="PF01266">
    <property type="entry name" value="DAO"/>
    <property type="match status" value="1"/>
</dbReference>
<dbReference type="SUPFAM" id="SSF54373">
    <property type="entry name" value="FAD-linked reductases, C-terminal domain"/>
    <property type="match status" value="1"/>
</dbReference>
<dbReference type="SUPFAM" id="SSF51905">
    <property type="entry name" value="FAD/NAD(P)-binding domain"/>
    <property type="match status" value="1"/>
</dbReference>
<proteinExistence type="inferred from homology"/>
<comment type="function">
    <text evidence="1">Catalyzes the oxidative demethylation of N-methyl-L-tryptophan.</text>
</comment>
<comment type="catalytic activity">
    <reaction evidence="1">
        <text>N(alpha)-methyl-L-tryptophan + O2 + H2O = L-tryptophan + formaldehyde + H2O2</text>
        <dbReference type="Rhea" id="RHEA:28006"/>
        <dbReference type="ChEBI" id="CHEBI:15377"/>
        <dbReference type="ChEBI" id="CHEBI:15379"/>
        <dbReference type="ChEBI" id="CHEBI:16240"/>
        <dbReference type="ChEBI" id="CHEBI:16842"/>
        <dbReference type="ChEBI" id="CHEBI:57283"/>
        <dbReference type="ChEBI" id="CHEBI:57912"/>
    </reaction>
</comment>
<comment type="cofactor">
    <cofactor evidence="1">
        <name>FAD</name>
        <dbReference type="ChEBI" id="CHEBI:57692"/>
    </cofactor>
    <text evidence="1">Binds 1 FAD per subunit.</text>
</comment>
<comment type="subunit">
    <text evidence="1">Monomer.</text>
</comment>
<comment type="similarity">
    <text evidence="1">Belongs to the MSOX/MTOX family. MTOX subfamily.</text>
</comment>
<name>MTOX_ECOSE</name>
<organism>
    <name type="scientific">Escherichia coli (strain SE11)</name>
    <dbReference type="NCBI Taxonomy" id="409438"/>
    <lineage>
        <taxon>Bacteria</taxon>
        <taxon>Pseudomonadati</taxon>
        <taxon>Pseudomonadota</taxon>
        <taxon>Gammaproteobacteria</taxon>
        <taxon>Enterobacterales</taxon>
        <taxon>Enterobacteriaceae</taxon>
        <taxon>Escherichia</taxon>
    </lineage>
</organism>
<reference key="1">
    <citation type="journal article" date="2008" name="DNA Res.">
        <title>Complete genome sequence and comparative analysis of the wild-type commensal Escherichia coli strain SE11 isolated from a healthy adult.</title>
        <authorList>
            <person name="Oshima K."/>
            <person name="Toh H."/>
            <person name="Ogura Y."/>
            <person name="Sasamoto H."/>
            <person name="Morita H."/>
            <person name="Park S.-H."/>
            <person name="Ooka T."/>
            <person name="Iyoda S."/>
            <person name="Taylor T.D."/>
            <person name="Hayashi T."/>
            <person name="Itoh K."/>
            <person name="Hattori M."/>
        </authorList>
    </citation>
    <scope>NUCLEOTIDE SEQUENCE [LARGE SCALE GENOMIC DNA]</scope>
    <source>
        <strain>SE11</strain>
    </source>
</reference>
<gene>
    <name evidence="1" type="primary">solA</name>
    <name type="ordered locus">ECSE_1122</name>
</gene>
<keyword id="KW-0274">FAD</keyword>
<keyword id="KW-0285">Flavoprotein</keyword>
<keyword id="KW-0560">Oxidoreductase</keyword>
<protein>
    <recommendedName>
        <fullName evidence="1">N-methyl-L-tryptophan oxidase</fullName>
        <shortName evidence="1">MTOX</shortName>
        <ecNumber evidence="1">1.5.3.-</ecNumber>
    </recommendedName>
</protein>